<accession>A4IXE8</accession>
<dbReference type="EC" id="2.1.1.45" evidence="1"/>
<dbReference type="EMBL" id="CP000608">
    <property type="protein sequence ID" value="ABO46600.1"/>
    <property type="molecule type" value="Genomic_DNA"/>
</dbReference>
<dbReference type="RefSeq" id="WP_003025777.1">
    <property type="nucleotide sequence ID" value="NC_009257.1"/>
</dbReference>
<dbReference type="SMR" id="A4IXE8"/>
<dbReference type="KEGG" id="ftw:FTW_0717"/>
<dbReference type="HOGENOM" id="CLU_021669_0_0_6"/>
<dbReference type="UniPathway" id="UPA00575"/>
<dbReference type="GO" id="GO:0005829">
    <property type="term" value="C:cytosol"/>
    <property type="evidence" value="ECO:0007669"/>
    <property type="project" value="TreeGrafter"/>
</dbReference>
<dbReference type="GO" id="GO:0004799">
    <property type="term" value="F:thymidylate synthase activity"/>
    <property type="evidence" value="ECO:0007669"/>
    <property type="project" value="UniProtKB-UniRule"/>
</dbReference>
<dbReference type="GO" id="GO:0006231">
    <property type="term" value="P:dTMP biosynthetic process"/>
    <property type="evidence" value="ECO:0007669"/>
    <property type="project" value="UniProtKB-UniRule"/>
</dbReference>
<dbReference type="GO" id="GO:0006235">
    <property type="term" value="P:dTTP biosynthetic process"/>
    <property type="evidence" value="ECO:0007669"/>
    <property type="project" value="UniProtKB-UniRule"/>
</dbReference>
<dbReference type="GO" id="GO:0032259">
    <property type="term" value="P:methylation"/>
    <property type="evidence" value="ECO:0007669"/>
    <property type="project" value="UniProtKB-KW"/>
</dbReference>
<dbReference type="CDD" id="cd00351">
    <property type="entry name" value="TS_Pyrimidine_HMase"/>
    <property type="match status" value="1"/>
</dbReference>
<dbReference type="FunFam" id="3.30.572.10:FF:000013">
    <property type="entry name" value="Thymidylate synthase"/>
    <property type="match status" value="1"/>
</dbReference>
<dbReference type="Gene3D" id="3.30.572.10">
    <property type="entry name" value="Thymidylate synthase/dCMP hydroxymethylase domain"/>
    <property type="match status" value="1"/>
</dbReference>
<dbReference type="HAMAP" id="MF_00008">
    <property type="entry name" value="Thymidy_synth_bact"/>
    <property type="match status" value="1"/>
</dbReference>
<dbReference type="InterPro" id="IPR045097">
    <property type="entry name" value="Thymidate_synth/dCMP_Mease"/>
</dbReference>
<dbReference type="InterPro" id="IPR023451">
    <property type="entry name" value="Thymidate_synth/dCMP_Mease_dom"/>
</dbReference>
<dbReference type="InterPro" id="IPR036926">
    <property type="entry name" value="Thymidate_synth/dCMP_Mease_sf"/>
</dbReference>
<dbReference type="InterPro" id="IPR000398">
    <property type="entry name" value="Thymidylate_synthase"/>
</dbReference>
<dbReference type="NCBIfam" id="NF002497">
    <property type="entry name" value="PRK01827.1-3"/>
    <property type="match status" value="1"/>
</dbReference>
<dbReference type="NCBIfam" id="NF002499">
    <property type="entry name" value="PRK01827.1-5"/>
    <property type="match status" value="1"/>
</dbReference>
<dbReference type="NCBIfam" id="TIGR03284">
    <property type="entry name" value="thym_sym"/>
    <property type="match status" value="2"/>
</dbReference>
<dbReference type="PANTHER" id="PTHR11548">
    <property type="entry name" value="THYMIDYLATE SYNTHASE 1"/>
    <property type="match status" value="1"/>
</dbReference>
<dbReference type="PANTHER" id="PTHR11548:SF1">
    <property type="entry name" value="THYMIDYLATE SYNTHASE 1"/>
    <property type="match status" value="1"/>
</dbReference>
<dbReference type="Pfam" id="PF00303">
    <property type="entry name" value="Thymidylat_synt"/>
    <property type="match status" value="1"/>
</dbReference>
<dbReference type="PRINTS" id="PR00108">
    <property type="entry name" value="THYMDSNTHASE"/>
</dbReference>
<dbReference type="SUPFAM" id="SSF55831">
    <property type="entry name" value="Thymidylate synthase/dCMP hydroxymethylase"/>
    <property type="match status" value="1"/>
</dbReference>
<protein>
    <recommendedName>
        <fullName evidence="1">Thymidylate synthase</fullName>
        <shortName evidence="1">TS</shortName>
        <shortName evidence="1">TSase</shortName>
        <ecNumber evidence="1">2.1.1.45</ecNumber>
    </recommendedName>
</protein>
<reference key="1">
    <citation type="journal article" date="2007" name="PLoS ONE">
        <title>Complete genomic characterization of a pathogenic A.II strain of Francisella tularensis subspecies tularensis.</title>
        <authorList>
            <person name="Beckstrom-Sternberg S.M."/>
            <person name="Auerbach R.K."/>
            <person name="Godbole S."/>
            <person name="Pearson J.V."/>
            <person name="Beckstrom-Sternberg J.S."/>
            <person name="Deng Z."/>
            <person name="Munk C."/>
            <person name="Kubota K."/>
            <person name="Zhou Y."/>
            <person name="Bruce D."/>
            <person name="Noronha J."/>
            <person name="Scheuermann R.H."/>
            <person name="Wang A."/>
            <person name="Wei X."/>
            <person name="Wang J."/>
            <person name="Hao J."/>
            <person name="Wagner D.M."/>
            <person name="Brettin T.S."/>
            <person name="Brown N."/>
            <person name="Gilna P."/>
            <person name="Keim P.S."/>
        </authorList>
    </citation>
    <scope>NUCLEOTIDE SEQUENCE [LARGE SCALE GENOMIC DNA]</scope>
    <source>
        <strain>WY96-3418</strain>
    </source>
</reference>
<gene>
    <name evidence="1" type="primary">thyA</name>
    <name type="ordered locus">FTW_0717</name>
</gene>
<name>TYSY_FRATW</name>
<comment type="function">
    <text evidence="1">Catalyzes the reductive methylation of 2'-deoxyuridine-5'-monophosphate (dUMP) to 2'-deoxythymidine-5'-monophosphate (dTMP) while utilizing 5,10-methylenetetrahydrofolate (mTHF) as the methyl donor and reductant in the reaction, yielding dihydrofolate (DHF) as a by-product. This enzymatic reaction provides an intracellular de novo source of dTMP, an essential precursor for DNA biosynthesis.</text>
</comment>
<comment type="catalytic activity">
    <reaction evidence="1">
        <text>dUMP + (6R)-5,10-methylene-5,6,7,8-tetrahydrofolate = 7,8-dihydrofolate + dTMP</text>
        <dbReference type="Rhea" id="RHEA:12104"/>
        <dbReference type="ChEBI" id="CHEBI:15636"/>
        <dbReference type="ChEBI" id="CHEBI:57451"/>
        <dbReference type="ChEBI" id="CHEBI:63528"/>
        <dbReference type="ChEBI" id="CHEBI:246422"/>
        <dbReference type="EC" id="2.1.1.45"/>
    </reaction>
</comment>
<comment type="pathway">
    <text evidence="1">Pyrimidine metabolism; dTTP biosynthesis.</text>
</comment>
<comment type="subunit">
    <text evidence="1">Homodimer.</text>
</comment>
<comment type="subcellular location">
    <subcellularLocation>
        <location evidence="1">Cytoplasm</location>
    </subcellularLocation>
</comment>
<comment type="similarity">
    <text evidence="1">Belongs to the thymidylate synthase family. Bacterial-type ThyA subfamily.</text>
</comment>
<proteinExistence type="inferred from homology"/>
<sequence>MREYLNFLKYIKENGVLKGDRTGTGTRSIFGYQMRFDLQKGFPLVTTKKIHIPSVVHELLWFLSGSTNIKYLNDNNVRIWNEWATVDGELGPIYGKQWRDFNGQGIDQIADVIQMLKTNPNSRRILVSAWNPCVVPSEKISPQENVVKGNSALPPCHAMFQFYVANNKLSCMLTQRSADAFLGVPFNIASYSLLTHMVAQQCNLDVGEFIWSGGDCHIYNNHIEQVNEQLSREPLALPTLKILRKPNSIFDYKYEDFEFENYNHHPAIKAKISV</sequence>
<organism>
    <name type="scientific">Francisella tularensis subsp. tularensis (strain WY96-3418)</name>
    <dbReference type="NCBI Taxonomy" id="418136"/>
    <lineage>
        <taxon>Bacteria</taxon>
        <taxon>Pseudomonadati</taxon>
        <taxon>Pseudomonadota</taxon>
        <taxon>Gammaproteobacteria</taxon>
        <taxon>Thiotrichales</taxon>
        <taxon>Francisellaceae</taxon>
        <taxon>Francisella</taxon>
    </lineage>
</organism>
<keyword id="KW-0963">Cytoplasm</keyword>
<keyword id="KW-0489">Methyltransferase</keyword>
<keyword id="KW-0545">Nucleotide biosynthesis</keyword>
<keyword id="KW-0808">Transferase</keyword>
<feature type="chain" id="PRO_1000000602" description="Thymidylate synthase">
    <location>
        <begin position="1"/>
        <end position="274"/>
    </location>
</feature>
<feature type="active site" description="Nucleophile" evidence="1">
    <location>
        <position position="156"/>
    </location>
</feature>
<feature type="binding site" description="in other chain" evidence="1">
    <location>
        <position position="21"/>
    </location>
    <ligand>
        <name>dUMP</name>
        <dbReference type="ChEBI" id="CHEBI:246422"/>
        <note>ligand shared between dimeric partners</note>
    </ligand>
</feature>
<feature type="binding site" evidence="1">
    <location>
        <position position="51"/>
    </location>
    <ligand>
        <name>(6R)-5,10-methylene-5,6,7,8-tetrahydrofolate</name>
        <dbReference type="ChEBI" id="CHEBI:15636"/>
    </ligand>
</feature>
<feature type="binding site" evidence="1">
    <location>
        <begin position="123"/>
        <end position="124"/>
    </location>
    <ligand>
        <name>dUMP</name>
        <dbReference type="ChEBI" id="CHEBI:246422"/>
        <note>ligand shared between dimeric partners</note>
    </ligand>
</feature>
<feature type="binding site" description="in other chain" evidence="1">
    <location>
        <begin position="176"/>
        <end position="179"/>
    </location>
    <ligand>
        <name>dUMP</name>
        <dbReference type="ChEBI" id="CHEBI:246422"/>
        <note>ligand shared between dimeric partners</note>
    </ligand>
</feature>
<feature type="binding site" evidence="1">
    <location>
        <position position="179"/>
    </location>
    <ligand>
        <name>(6R)-5,10-methylene-5,6,7,8-tetrahydrofolate</name>
        <dbReference type="ChEBI" id="CHEBI:15636"/>
    </ligand>
</feature>
<feature type="binding site" description="in other chain" evidence="1">
    <location>
        <position position="187"/>
    </location>
    <ligand>
        <name>dUMP</name>
        <dbReference type="ChEBI" id="CHEBI:246422"/>
        <note>ligand shared between dimeric partners</note>
    </ligand>
</feature>
<feature type="binding site" description="in other chain" evidence="1">
    <location>
        <begin position="217"/>
        <end position="219"/>
    </location>
    <ligand>
        <name>dUMP</name>
        <dbReference type="ChEBI" id="CHEBI:246422"/>
        <note>ligand shared between dimeric partners</note>
    </ligand>
</feature>
<feature type="binding site" evidence="1">
    <location>
        <position position="273"/>
    </location>
    <ligand>
        <name>(6R)-5,10-methylene-5,6,7,8-tetrahydrofolate</name>
        <dbReference type="ChEBI" id="CHEBI:15636"/>
    </ligand>
</feature>
<evidence type="ECO:0000255" key="1">
    <source>
        <dbReference type="HAMAP-Rule" id="MF_00008"/>
    </source>
</evidence>